<reference key="1">
    <citation type="journal article" date="2010" name="Phytochemistry">
        <title>Geraniol and linalool synthases from wild species of perilla.</title>
        <authorList>
            <person name="Masumoto N."/>
            <person name="Korin M."/>
            <person name="Ito M."/>
        </authorList>
    </citation>
    <scope>NUCLEOTIDE SEQUENCE [MRNA]</scope>
    <scope>FUNCTION</scope>
    <scope>CATALYTIC ACTIVITY</scope>
    <scope>PATHWAY</scope>
    <scope>COFACTOR</scope>
    <source>
        <strain>cv. 5031</strain>
    </source>
</reference>
<keyword id="KW-0150">Chloroplast</keyword>
<keyword id="KW-0378">Hydrolase</keyword>
<keyword id="KW-0460">Magnesium</keyword>
<keyword id="KW-0479">Metal-binding</keyword>
<keyword id="KW-0934">Plastid</keyword>
<keyword id="KW-0809">Transit peptide</keyword>
<organism>
    <name type="scientific">Perilla frutescens var. hirtella</name>
    <name type="common">Perilla citriodora</name>
    <name type="synonym">Perilla setoyensis</name>
    <dbReference type="NCBI Taxonomy" id="608512"/>
    <lineage>
        <taxon>Eukaryota</taxon>
        <taxon>Viridiplantae</taxon>
        <taxon>Streptophyta</taxon>
        <taxon>Embryophyta</taxon>
        <taxon>Tracheophyta</taxon>
        <taxon>Spermatophyta</taxon>
        <taxon>Magnoliopsida</taxon>
        <taxon>eudicotyledons</taxon>
        <taxon>Gunneridae</taxon>
        <taxon>Pentapetalae</taxon>
        <taxon>asterids</taxon>
        <taxon>lamiids</taxon>
        <taxon>Lamiales</taxon>
        <taxon>Lamiaceae</taxon>
        <taxon>Nepetoideae</taxon>
        <taxon>Elsholtzieae</taxon>
        <taxon>Perilla</taxon>
    </lineage>
</organism>
<accession>C0KWV4</accession>
<feature type="transit peptide" description="Chloroplast" evidence="5">
    <location>
        <begin position="1"/>
        <end position="35"/>
    </location>
</feature>
<feature type="chain" id="PRO_0000455253" description="Geraniol synthase Tps-5031G8, chloroplastic">
    <location>
        <begin position="36"/>
        <end position="603"/>
    </location>
</feature>
<feature type="short sequence motif" description="DDXXD motif" evidence="8">
    <location>
        <begin position="356"/>
        <end position="360"/>
    </location>
</feature>
<feature type="binding site" evidence="3">
    <location>
        <position position="319"/>
    </location>
    <ligand>
        <name>(2E)-geranyl diphosphate</name>
        <dbReference type="ChEBI" id="CHEBI:58057"/>
    </ligand>
</feature>
<feature type="binding site" evidence="3">
    <location>
        <position position="356"/>
    </location>
    <ligand>
        <name>(2E)-geranyl diphosphate</name>
        <dbReference type="ChEBI" id="CHEBI:58057"/>
    </ligand>
</feature>
<feature type="binding site" evidence="3">
    <location>
        <position position="356"/>
    </location>
    <ligand>
        <name>Mg(2+)</name>
        <dbReference type="ChEBI" id="CHEBI:18420"/>
        <label>1</label>
    </ligand>
</feature>
<feature type="binding site" evidence="3">
    <location>
        <position position="356"/>
    </location>
    <ligand>
        <name>Mg(2+)</name>
        <dbReference type="ChEBI" id="CHEBI:18420"/>
        <label>2</label>
    </ligand>
</feature>
<feature type="binding site" evidence="3">
    <location>
        <position position="360"/>
    </location>
    <ligand>
        <name>(2E)-geranyl diphosphate</name>
        <dbReference type="ChEBI" id="CHEBI:58057"/>
    </ligand>
</feature>
<feature type="binding site" evidence="3">
    <location>
        <position position="360"/>
    </location>
    <ligand>
        <name>Mg(2+)</name>
        <dbReference type="ChEBI" id="CHEBI:18420"/>
        <label>1</label>
    </ligand>
</feature>
<feature type="binding site" evidence="3">
    <location>
        <position position="360"/>
    </location>
    <ligand>
        <name>Mg(2+)</name>
        <dbReference type="ChEBI" id="CHEBI:18420"/>
        <label>2</label>
    </ligand>
</feature>
<feature type="binding site" evidence="3">
    <location>
        <position position="497"/>
    </location>
    <ligand>
        <name>(2E)-geranyl diphosphate</name>
        <dbReference type="ChEBI" id="CHEBI:58057"/>
    </ligand>
</feature>
<feature type="binding site" evidence="3">
    <location>
        <position position="500"/>
    </location>
    <ligand>
        <name>(2E)-geranyl diphosphate</name>
        <dbReference type="ChEBI" id="CHEBI:58057"/>
    </ligand>
</feature>
<feature type="binding site" evidence="3">
    <location>
        <position position="500"/>
    </location>
    <ligand>
        <name>Mg(2+)</name>
        <dbReference type="ChEBI" id="CHEBI:18420"/>
        <label>3</label>
    </ligand>
</feature>
<feature type="binding site" evidence="3">
    <location>
        <position position="504"/>
    </location>
    <ligand>
        <name>Mg(2+)</name>
        <dbReference type="ChEBI" id="CHEBI:18420"/>
        <label>3</label>
    </ligand>
</feature>
<feature type="binding site" evidence="3">
    <location>
        <position position="508"/>
    </location>
    <ligand>
        <name>Mg(2+)</name>
        <dbReference type="ChEBI" id="CHEBI:18420"/>
        <label>3</label>
    </ligand>
</feature>
<sequence>MCSISQKVVIGLNKAAANNCLQNLDRRGFKTRRVSSSEAASCLRASSSLQLDVKPVEEGRRSGNYQPSIWDFNYVQSLNTPYKEERYLTRHAELIVQVKPLLEKKMEATQQLELIDDLNNLGLSYFFQDRIKQILSFIYDENQCFHSNINDQAEKRDLYFTALGFRLLRQHGFNVSQEVFDCFKNDKGSDFKASLSGNTKGLLQLYEASFLVREGEDTLELARQFATKFLRRKLDEIDDNHLLSRIHHSLEIPLHWRIQRLEARWFLDAYATRHDMNPIILELAKLDFNIIQATHQEELKDVSRWWQNTRLAEKLPFVRDRLVESYFWAIALFEPHQYGYQRRVAAKIITLATSIDDVYDIYGTLDELQLFTDNFRRWDTESLGGLPYSMQLFYMVIHNFVSELAYEILKEKGFIAIPYLQRSWVDLAESFLKEANWYYSGYTPSLEEYIDNGSISIGAVAVLSQVYFTLANSIEKPKIESMYKYHHILRLSGLLVRLHDDLGTSLFEKKRGDVPKAVEICMKERNDTEEEAEEHVKYLIREAWKEMNTATAAAGCPFMDELNVAAANLGRAAQFVYLDGDGHGVQHSKIHQQMGGLMFKPYV</sequence>
<evidence type="ECO:0000250" key="1">
    <source>
        <dbReference type="UniProtKB" id="A0A1C9J6A7"/>
    </source>
</evidence>
<evidence type="ECO:0000250" key="2">
    <source>
        <dbReference type="UniProtKB" id="G0Y7D1"/>
    </source>
</evidence>
<evidence type="ECO:0000250" key="3">
    <source>
        <dbReference type="UniProtKB" id="Q40577"/>
    </source>
</evidence>
<evidence type="ECO:0000250" key="4">
    <source>
        <dbReference type="UniProtKB" id="Q6JD73"/>
    </source>
</evidence>
<evidence type="ECO:0000255" key="5"/>
<evidence type="ECO:0000269" key="6">
    <source>
    </source>
</evidence>
<evidence type="ECO:0000303" key="7">
    <source>
    </source>
</evidence>
<evidence type="ECO:0000305" key="8"/>
<protein>
    <recommendedName>
        <fullName evidence="7">Geraniol synthase Tps-5031G8, chloroplastic</fullName>
        <shortName evidence="7">PsTps-5031G</shortName>
        <ecNumber evidence="6">3.1.7.11</ecNumber>
    </recommendedName>
</protein>
<proteinExistence type="evidence at protein level"/>
<name>GRNLG_PERFH</name>
<comment type="function">
    <text evidence="6">Monoterpene synthase (mono-TPS) involved in the biosynthesis of monoterpenes natural products (PubMed:20447664). Catalyzes the conversion of (2E)-geranyl diphosphate (GPP) into geraniol (PubMed:20447664).</text>
</comment>
<comment type="catalytic activity">
    <reaction evidence="6">
        <text>(2E)-geranyl diphosphate + H2O = (2E)-geraniol + diphosphate</text>
        <dbReference type="Rhea" id="RHEA:32679"/>
        <dbReference type="ChEBI" id="CHEBI:15377"/>
        <dbReference type="ChEBI" id="CHEBI:17447"/>
        <dbReference type="ChEBI" id="CHEBI:33019"/>
        <dbReference type="ChEBI" id="CHEBI:58057"/>
        <dbReference type="EC" id="3.1.7.11"/>
    </reaction>
    <physiologicalReaction direction="left-to-right" evidence="6">
        <dbReference type="Rhea" id="RHEA:32680"/>
    </physiologicalReaction>
</comment>
<comment type="cofactor">
    <cofactor evidence="6">
        <name>Mg(2+)</name>
        <dbReference type="ChEBI" id="CHEBI:18420"/>
    </cofactor>
    <cofactor evidence="6">
        <name>Mn(2+)</name>
        <dbReference type="ChEBI" id="CHEBI:29035"/>
    </cofactor>
    <text evidence="1">Binds 3 Mg(2+) or Mn(2+) ions per subunit.</text>
</comment>
<comment type="pathway">
    <text evidence="2">Secondary metabolite biosynthesis; terpenoid biosynthesis.</text>
</comment>
<comment type="subunit">
    <text evidence="4">Monomer.</text>
</comment>
<comment type="subcellular location">
    <subcellularLocation>
        <location evidence="5">Plastid</location>
        <location evidence="5">Chloroplast</location>
    </subcellularLocation>
</comment>
<comment type="domain">
    <text evidence="8">The Asp-Asp-Xaa-Xaa-Asp/Glu (DDXXD/E) motif is important for the catalytic activity, presumably through binding to Mg(2+).</text>
</comment>
<comment type="similarity">
    <text evidence="8">Belongs to the terpene synthase family. Tpsb subfamily.</text>
</comment>
<dbReference type="EC" id="3.1.7.11" evidence="6"/>
<dbReference type="EMBL" id="FJ644545">
    <property type="protein sequence ID" value="ACN42010.1"/>
    <property type="molecule type" value="mRNA"/>
</dbReference>
<dbReference type="SMR" id="C0KWV4"/>
<dbReference type="BRENDA" id="3.1.7.11">
    <property type="organism ID" value="11840"/>
</dbReference>
<dbReference type="UniPathway" id="UPA00213"/>
<dbReference type="GO" id="GO:0009507">
    <property type="term" value="C:chloroplast"/>
    <property type="evidence" value="ECO:0007669"/>
    <property type="project" value="UniProtKB-SubCell"/>
</dbReference>
<dbReference type="GO" id="GO:0016787">
    <property type="term" value="F:hydrolase activity"/>
    <property type="evidence" value="ECO:0007669"/>
    <property type="project" value="UniProtKB-KW"/>
</dbReference>
<dbReference type="GO" id="GO:0000287">
    <property type="term" value="F:magnesium ion binding"/>
    <property type="evidence" value="ECO:0007669"/>
    <property type="project" value="InterPro"/>
</dbReference>
<dbReference type="GO" id="GO:0010333">
    <property type="term" value="F:terpene synthase activity"/>
    <property type="evidence" value="ECO:0007669"/>
    <property type="project" value="InterPro"/>
</dbReference>
<dbReference type="GO" id="GO:0016102">
    <property type="term" value="P:diterpenoid biosynthetic process"/>
    <property type="evidence" value="ECO:0007669"/>
    <property type="project" value="InterPro"/>
</dbReference>
<dbReference type="GO" id="GO:1903448">
    <property type="term" value="P:geraniol biosynthetic process"/>
    <property type="evidence" value="ECO:0000314"/>
    <property type="project" value="UniProtKB"/>
</dbReference>
<dbReference type="GO" id="GO:0016099">
    <property type="term" value="P:monoterpenoid biosynthetic process"/>
    <property type="evidence" value="ECO:0000314"/>
    <property type="project" value="UniProtKB"/>
</dbReference>
<dbReference type="CDD" id="cd00684">
    <property type="entry name" value="Terpene_cyclase_plant_C1"/>
    <property type="match status" value="1"/>
</dbReference>
<dbReference type="FunFam" id="1.10.600.10:FF:000007">
    <property type="entry name" value="Isoprene synthase, chloroplastic"/>
    <property type="match status" value="1"/>
</dbReference>
<dbReference type="FunFam" id="1.50.10.130:FF:000001">
    <property type="entry name" value="Isoprene synthase, chloroplastic"/>
    <property type="match status" value="1"/>
</dbReference>
<dbReference type="Gene3D" id="1.10.600.10">
    <property type="entry name" value="Farnesyl Diphosphate Synthase"/>
    <property type="match status" value="1"/>
</dbReference>
<dbReference type="Gene3D" id="1.50.10.130">
    <property type="entry name" value="Terpene synthase, N-terminal domain"/>
    <property type="match status" value="1"/>
</dbReference>
<dbReference type="InterPro" id="IPR008949">
    <property type="entry name" value="Isoprenoid_synthase_dom_sf"/>
</dbReference>
<dbReference type="InterPro" id="IPR044814">
    <property type="entry name" value="Terpene_cyclase_plant_C1"/>
</dbReference>
<dbReference type="InterPro" id="IPR001906">
    <property type="entry name" value="Terpene_synth_N"/>
</dbReference>
<dbReference type="InterPro" id="IPR036965">
    <property type="entry name" value="Terpene_synth_N_sf"/>
</dbReference>
<dbReference type="InterPro" id="IPR050148">
    <property type="entry name" value="Terpene_synthase-like"/>
</dbReference>
<dbReference type="InterPro" id="IPR005630">
    <property type="entry name" value="Terpene_synthase_metal-bd"/>
</dbReference>
<dbReference type="InterPro" id="IPR008930">
    <property type="entry name" value="Terpenoid_cyclase/PrenylTrfase"/>
</dbReference>
<dbReference type="PANTHER" id="PTHR31225">
    <property type="entry name" value="OS04G0344100 PROTEIN-RELATED"/>
    <property type="match status" value="1"/>
</dbReference>
<dbReference type="PANTHER" id="PTHR31225:SF9">
    <property type="entry name" value="TERPENE SYNTHASE 10"/>
    <property type="match status" value="1"/>
</dbReference>
<dbReference type="Pfam" id="PF01397">
    <property type="entry name" value="Terpene_synth"/>
    <property type="match status" value="1"/>
</dbReference>
<dbReference type="Pfam" id="PF03936">
    <property type="entry name" value="Terpene_synth_C"/>
    <property type="match status" value="1"/>
</dbReference>
<dbReference type="SFLD" id="SFLDS00005">
    <property type="entry name" value="Isoprenoid_Synthase_Type_I"/>
    <property type="match status" value="1"/>
</dbReference>
<dbReference type="SFLD" id="SFLDG01604">
    <property type="entry name" value="Terpene_Cyclase_Like_1_C_Termi"/>
    <property type="match status" value="1"/>
</dbReference>
<dbReference type="SFLD" id="SFLDG01014">
    <property type="entry name" value="Terpene_Cyclase_Like_1_N-term"/>
    <property type="match status" value="1"/>
</dbReference>
<dbReference type="SUPFAM" id="SSF48239">
    <property type="entry name" value="Terpenoid cyclases/Protein prenyltransferases"/>
    <property type="match status" value="1"/>
</dbReference>
<dbReference type="SUPFAM" id="SSF48576">
    <property type="entry name" value="Terpenoid synthases"/>
    <property type="match status" value="1"/>
</dbReference>
<gene>
    <name evidence="7" type="primary">Tps-5031G8</name>
</gene>